<reference key="1">
    <citation type="journal article" date="1995" name="Plant Mol. Biol. Rep.">
        <title>The chloroplast genome of a chlorophyll a+c-containing alga, Odontella sinensis.</title>
        <authorList>
            <person name="Kowallik K.V."/>
            <person name="Stoebe B."/>
            <person name="Schaffran I."/>
            <person name="Kroth-Pancic P."/>
            <person name="Freier U."/>
        </authorList>
    </citation>
    <scope>NUCLEOTIDE SEQUENCE [LARGE SCALE GENOMIC DNA]</scope>
</reference>
<evidence type="ECO:0000250" key="1"/>
<evidence type="ECO:0000305" key="2"/>
<geneLocation type="chloroplast"/>
<proteinExistence type="inferred from homology"/>
<name>RR5_TRICV</name>
<dbReference type="EMBL" id="Z67753">
    <property type="protein sequence ID" value="CAA91632.1"/>
    <property type="molecule type" value="Genomic_DNA"/>
</dbReference>
<dbReference type="PIR" id="S78259">
    <property type="entry name" value="S78259"/>
</dbReference>
<dbReference type="RefSeq" id="NP_043600.1">
    <property type="nucleotide sequence ID" value="NC_001713.1"/>
</dbReference>
<dbReference type="SMR" id="P49493"/>
<dbReference type="GeneID" id="801749"/>
<dbReference type="GO" id="GO:0009507">
    <property type="term" value="C:chloroplast"/>
    <property type="evidence" value="ECO:0007669"/>
    <property type="project" value="UniProtKB-SubCell"/>
</dbReference>
<dbReference type="GO" id="GO:0015935">
    <property type="term" value="C:small ribosomal subunit"/>
    <property type="evidence" value="ECO:0007669"/>
    <property type="project" value="InterPro"/>
</dbReference>
<dbReference type="GO" id="GO:0019843">
    <property type="term" value="F:rRNA binding"/>
    <property type="evidence" value="ECO:0007669"/>
    <property type="project" value="UniProtKB-UniRule"/>
</dbReference>
<dbReference type="GO" id="GO:0003735">
    <property type="term" value="F:structural constituent of ribosome"/>
    <property type="evidence" value="ECO:0007669"/>
    <property type="project" value="InterPro"/>
</dbReference>
<dbReference type="GO" id="GO:0006412">
    <property type="term" value="P:translation"/>
    <property type="evidence" value="ECO:0007669"/>
    <property type="project" value="UniProtKB-UniRule"/>
</dbReference>
<dbReference type="FunFam" id="3.30.230.10:FF:000002">
    <property type="entry name" value="30S ribosomal protein S5"/>
    <property type="match status" value="1"/>
</dbReference>
<dbReference type="Gene3D" id="3.30.160.20">
    <property type="match status" value="1"/>
</dbReference>
<dbReference type="Gene3D" id="3.30.230.10">
    <property type="match status" value="1"/>
</dbReference>
<dbReference type="HAMAP" id="MF_01307_B">
    <property type="entry name" value="Ribosomal_uS5_B"/>
    <property type="match status" value="1"/>
</dbReference>
<dbReference type="InterPro" id="IPR020568">
    <property type="entry name" value="Ribosomal_Su5_D2-typ_SF"/>
</dbReference>
<dbReference type="InterPro" id="IPR000851">
    <property type="entry name" value="Ribosomal_uS5"/>
</dbReference>
<dbReference type="InterPro" id="IPR005712">
    <property type="entry name" value="Ribosomal_uS5_bac-type"/>
</dbReference>
<dbReference type="InterPro" id="IPR005324">
    <property type="entry name" value="Ribosomal_uS5_C"/>
</dbReference>
<dbReference type="InterPro" id="IPR013810">
    <property type="entry name" value="Ribosomal_uS5_N"/>
</dbReference>
<dbReference type="InterPro" id="IPR018192">
    <property type="entry name" value="Ribosomal_uS5_N_CS"/>
</dbReference>
<dbReference type="InterPro" id="IPR014721">
    <property type="entry name" value="Ribsml_uS5_D2-typ_fold_subgr"/>
</dbReference>
<dbReference type="NCBIfam" id="TIGR01021">
    <property type="entry name" value="rpsE_bact"/>
    <property type="match status" value="1"/>
</dbReference>
<dbReference type="PANTHER" id="PTHR48277">
    <property type="entry name" value="MITOCHONDRIAL RIBOSOMAL PROTEIN S5"/>
    <property type="match status" value="1"/>
</dbReference>
<dbReference type="PANTHER" id="PTHR48277:SF1">
    <property type="entry name" value="MITOCHONDRIAL RIBOSOMAL PROTEIN S5"/>
    <property type="match status" value="1"/>
</dbReference>
<dbReference type="Pfam" id="PF00333">
    <property type="entry name" value="Ribosomal_S5"/>
    <property type="match status" value="1"/>
</dbReference>
<dbReference type="Pfam" id="PF03719">
    <property type="entry name" value="Ribosomal_S5_C"/>
    <property type="match status" value="1"/>
</dbReference>
<dbReference type="SUPFAM" id="SSF54768">
    <property type="entry name" value="dsRNA-binding domain-like"/>
    <property type="match status" value="1"/>
</dbReference>
<dbReference type="SUPFAM" id="SSF54211">
    <property type="entry name" value="Ribosomal protein S5 domain 2-like"/>
    <property type="match status" value="1"/>
</dbReference>
<dbReference type="PROSITE" id="PS00585">
    <property type="entry name" value="RIBOSOMAL_S5"/>
    <property type="match status" value="1"/>
</dbReference>
<dbReference type="PROSITE" id="PS50881">
    <property type="entry name" value="S5_DSRBD"/>
    <property type="match status" value="1"/>
</dbReference>
<gene>
    <name type="primary">rps5</name>
</gene>
<keyword id="KW-0150">Chloroplast</keyword>
<keyword id="KW-0934">Plastid</keyword>
<keyword id="KW-0687">Ribonucleoprotein</keyword>
<keyword id="KW-0689">Ribosomal protein</keyword>
<keyword id="KW-0694">RNA-binding</keyword>
<keyword id="KW-0699">rRNA-binding</keyword>
<feature type="chain" id="PRO_0000131669" description="Small ribosomal subunit protein uS5c">
    <location>
        <begin position="1"/>
        <end position="185"/>
    </location>
</feature>
<feature type="domain" description="S5 DRBM">
    <location>
        <begin position="26"/>
        <end position="89"/>
    </location>
</feature>
<protein>
    <recommendedName>
        <fullName evidence="2">Small ribosomal subunit protein uS5c</fullName>
    </recommendedName>
    <alternativeName>
        <fullName>30S ribosomal protein S5, chloroplastic</fullName>
    </alternativeName>
</protein>
<comment type="function">
    <text evidence="1">With S4 and S12 plays an important role in translational accuracy.</text>
</comment>
<comment type="subunit">
    <text evidence="1">Part of the 30S ribosomal subunit. Contacts protein S4 (By similarity).</text>
</comment>
<comment type="subcellular location">
    <subcellularLocation>
        <location>Plastid</location>
        <location>Chloroplast</location>
    </subcellularLocation>
</comment>
<comment type="domain">
    <text>The N-terminal domain interacts with the head of the 30S subunit; the C-terminal domain interacts with the body and contacts protein S4. The interaction surface between S4 and S5 is involved in control of translational fidelity.</text>
</comment>
<comment type="similarity">
    <text evidence="2">Belongs to the universal ribosomal protein uS5 family.</text>
</comment>
<organism>
    <name type="scientific">Trieres chinensis</name>
    <name type="common">Marine centric diatom</name>
    <name type="synonym">Odontella sinensis</name>
    <dbReference type="NCBI Taxonomy" id="1514140"/>
    <lineage>
        <taxon>Eukaryota</taxon>
        <taxon>Sar</taxon>
        <taxon>Stramenopiles</taxon>
        <taxon>Ochrophyta</taxon>
        <taxon>Bacillariophyta</taxon>
        <taxon>Mediophyceae</taxon>
        <taxon>Biddulphiophycidae</taxon>
        <taxon>Eupodiscales</taxon>
        <taxon>Parodontellaceae</taxon>
        <taxon>Trieres</taxon>
    </lineage>
</organism>
<accession>P49493</accession>
<sequence length="185" mass="19697">MSTDLKQVNKSKKALQRNDNLSESKFVERLIKISRVSKVTKGGKKLSFRAIVVVGNENGQVGVGVGKADDVVNAFKKAKADGRKNLIKIPITKSLSIPHNVIGIFGACKIIMRPSIEGSGVIAGGSVRTVLEVAGIKNVIAKQLGSNNVLNNARAAVSGLNNLTTKSQVLKKRDLHSNSSEKINS</sequence>